<feature type="chain" id="PRO_0000267078" description="Enolase">
    <location>
        <begin position="1"/>
        <end position="428"/>
    </location>
</feature>
<feature type="active site" description="Proton donor" evidence="1">
    <location>
        <position position="209"/>
    </location>
</feature>
<feature type="active site" description="Proton acceptor" evidence="1">
    <location>
        <position position="340"/>
    </location>
</feature>
<feature type="binding site" evidence="1">
    <location>
        <position position="167"/>
    </location>
    <ligand>
        <name>(2R)-2-phosphoglycerate</name>
        <dbReference type="ChEBI" id="CHEBI:58289"/>
    </ligand>
</feature>
<feature type="binding site" evidence="1">
    <location>
        <position position="246"/>
    </location>
    <ligand>
        <name>Mg(2+)</name>
        <dbReference type="ChEBI" id="CHEBI:18420"/>
    </ligand>
</feature>
<feature type="binding site" evidence="1">
    <location>
        <position position="288"/>
    </location>
    <ligand>
        <name>Mg(2+)</name>
        <dbReference type="ChEBI" id="CHEBI:18420"/>
    </ligand>
</feature>
<feature type="binding site" evidence="1">
    <location>
        <position position="315"/>
    </location>
    <ligand>
        <name>Mg(2+)</name>
        <dbReference type="ChEBI" id="CHEBI:18420"/>
    </ligand>
</feature>
<feature type="binding site" evidence="1">
    <location>
        <position position="340"/>
    </location>
    <ligand>
        <name>(2R)-2-phosphoglycerate</name>
        <dbReference type="ChEBI" id="CHEBI:58289"/>
    </ligand>
</feature>
<feature type="binding site" evidence="1">
    <location>
        <position position="369"/>
    </location>
    <ligand>
        <name>(2R)-2-phosphoglycerate</name>
        <dbReference type="ChEBI" id="CHEBI:58289"/>
    </ligand>
</feature>
<feature type="binding site" evidence="1">
    <location>
        <position position="370"/>
    </location>
    <ligand>
        <name>(2R)-2-phosphoglycerate</name>
        <dbReference type="ChEBI" id="CHEBI:58289"/>
    </ligand>
</feature>
<feature type="binding site" evidence="1">
    <location>
        <position position="391"/>
    </location>
    <ligand>
        <name>(2R)-2-phosphoglycerate</name>
        <dbReference type="ChEBI" id="CHEBI:58289"/>
    </ligand>
</feature>
<name>ENO_PSE14</name>
<dbReference type="EC" id="4.2.1.11" evidence="1"/>
<dbReference type="EMBL" id="CP000058">
    <property type="protein sequence ID" value="AAZ36355.1"/>
    <property type="molecule type" value="Genomic_DNA"/>
</dbReference>
<dbReference type="RefSeq" id="WP_004666020.1">
    <property type="nucleotide sequence ID" value="NC_005773.3"/>
</dbReference>
<dbReference type="SMR" id="Q48F79"/>
<dbReference type="GeneID" id="61868787"/>
<dbReference type="KEGG" id="psp:PSPPH_3820"/>
<dbReference type="eggNOG" id="COG0148">
    <property type="taxonomic scope" value="Bacteria"/>
</dbReference>
<dbReference type="HOGENOM" id="CLU_031223_2_1_6"/>
<dbReference type="UniPathway" id="UPA00109">
    <property type="reaction ID" value="UER00187"/>
</dbReference>
<dbReference type="Proteomes" id="UP000000551">
    <property type="component" value="Chromosome"/>
</dbReference>
<dbReference type="GO" id="GO:0009986">
    <property type="term" value="C:cell surface"/>
    <property type="evidence" value="ECO:0007669"/>
    <property type="project" value="UniProtKB-SubCell"/>
</dbReference>
<dbReference type="GO" id="GO:0005576">
    <property type="term" value="C:extracellular region"/>
    <property type="evidence" value="ECO:0007669"/>
    <property type="project" value="UniProtKB-SubCell"/>
</dbReference>
<dbReference type="GO" id="GO:0000015">
    <property type="term" value="C:phosphopyruvate hydratase complex"/>
    <property type="evidence" value="ECO:0007669"/>
    <property type="project" value="InterPro"/>
</dbReference>
<dbReference type="GO" id="GO:0000287">
    <property type="term" value="F:magnesium ion binding"/>
    <property type="evidence" value="ECO:0007669"/>
    <property type="project" value="UniProtKB-UniRule"/>
</dbReference>
<dbReference type="GO" id="GO:0004634">
    <property type="term" value="F:phosphopyruvate hydratase activity"/>
    <property type="evidence" value="ECO:0007669"/>
    <property type="project" value="UniProtKB-UniRule"/>
</dbReference>
<dbReference type="GO" id="GO:0006096">
    <property type="term" value="P:glycolytic process"/>
    <property type="evidence" value="ECO:0007669"/>
    <property type="project" value="UniProtKB-UniRule"/>
</dbReference>
<dbReference type="CDD" id="cd03313">
    <property type="entry name" value="enolase"/>
    <property type="match status" value="1"/>
</dbReference>
<dbReference type="FunFam" id="3.20.20.120:FF:000001">
    <property type="entry name" value="Enolase"/>
    <property type="match status" value="1"/>
</dbReference>
<dbReference type="FunFam" id="3.30.390.10:FF:000001">
    <property type="entry name" value="Enolase"/>
    <property type="match status" value="1"/>
</dbReference>
<dbReference type="Gene3D" id="3.20.20.120">
    <property type="entry name" value="Enolase-like C-terminal domain"/>
    <property type="match status" value="1"/>
</dbReference>
<dbReference type="Gene3D" id="3.30.390.10">
    <property type="entry name" value="Enolase-like, N-terminal domain"/>
    <property type="match status" value="1"/>
</dbReference>
<dbReference type="HAMAP" id="MF_00318">
    <property type="entry name" value="Enolase"/>
    <property type="match status" value="1"/>
</dbReference>
<dbReference type="InterPro" id="IPR000941">
    <property type="entry name" value="Enolase"/>
</dbReference>
<dbReference type="InterPro" id="IPR036849">
    <property type="entry name" value="Enolase-like_C_sf"/>
</dbReference>
<dbReference type="InterPro" id="IPR029017">
    <property type="entry name" value="Enolase-like_N"/>
</dbReference>
<dbReference type="InterPro" id="IPR020810">
    <property type="entry name" value="Enolase_C"/>
</dbReference>
<dbReference type="InterPro" id="IPR020809">
    <property type="entry name" value="Enolase_CS"/>
</dbReference>
<dbReference type="InterPro" id="IPR020811">
    <property type="entry name" value="Enolase_N"/>
</dbReference>
<dbReference type="NCBIfam" id="TIGR01060">
    <property type="entry name" value="eno"/>
    <property type="match status" value="1"/>
</dbReference>
<dbReference type="PANTHER" id="PTHR11902">
    <property type="entry name" value="ENOLASE"/>
    <property type="match status" value="1"/>
</dbReference>
<dbReference type="PANTHER" id="PTHR11902:SF1">
    <property type="entry name" value="ENOLASE"/>
    <property type="match status" value="1"/>
</dbReference>
<dbReference type="Pfam" id="PF00113">
    <property type="entry name" value="Enolase_C"/>
    <property type="match status" value="1"/>
</dbReference>
<dbReference type="Pfam" id="PF03952">
    <property type="entry name" value="Enolase_N"/>
    <property type="match status" value="1"/>
</dbReference>
<dbReference type="PIRSF" id="PIRSF001400">
    <property type="entry name" value="Enolase"/>
    <property type="match status" value="1"/>
</dbReference>
<dbReference type="PRINTS" id="PR00148">
    <property type="entry name" value="ENOLASE"/>
</dbReference>
<dbReference type="SFLD" id="SFLDS00001">
    <property type="entry name" value="Enolase"/>
    <property type="match status" value="1"/>
</dbReference>
<dbReference type="SFLD" id="SFLDF00002">
    <property type="entry name" value="enolase"/>
    <property type="match status" value="1"/>
</dbReference>
<dbReference type="SMART" id="SM01192">
    <property type="entry name" value="Enolase_C"/>
    <property type="match status" value="1"/>
</dbReference>
<dbReference type="SMART" id="SM01193">
    <property type="entry name" value="Enolase_N"/>
    <property type="match status" value="1"/>
</dbReference>
<dbReference type="SUPFAM" id="SSF51604">
    <property type="entry name" value="Enolase C-terminal domain-like"/>
    <property type="match status" value="1"/>
</dbReference>
<dbReference type="SUPFAM" id="SSF54826">
    <property type="entry name" value="Enolase N-terminal domain-like"/>
    <property type="match status" value="1"/>
</dbReference>
<dbReference type="PROSITE" id="PS00164">
    <property type="entry name" value="ENOLASE"/>
    <property type="match status" value="1"/>
</dbReference>
<protein>
    <recommendedName>
        <fullName evidence="1">Enolase</fullName>
        <ecNumber evidence="1">4.2.1.11</ecNumber>
    </recommendedName>
    <alternativeName>
        <fullName evidence="1">2-phospho-D-glycerate hydro-lyase</fullName>
    </alternativeName>
    <alternativeName>
        <fullName evidence="1">2-phosphoglycerate dehydratase</fullName>
    </alternativeName>
</protein>
<reference key="1">
    <citation type="journal article" date="2005" name="J. Bacteriol.">
        <title>Whole-genome sequence analysis of Pseudomonas syringae pv. phaseolicola 1448A reveals divergence among pathovars in genes involved in virulence and transposition.</title>
        <authorList>
            <person name="Joardar V."/>
            <person name="Lindeberg M."/>
            <person name="Jackson R.W."/>
            <person name="Selengut J."/>
            <person name="Dodson R."/>
            <person name="Brinkac L.M."/>
            <person name="Daugherty S.C."/>
            <person name="DeBoy R.T."/>
            <person name="Durkin A.S."/>
            <person name="Gwinn Giglio M."/>
            <person name="Madupu R."/>
            <person name="Nelson W.C."/>
            <person name="Rosovitz M.J."/>
            <person name="Sullivan S.A."/>
            <person name="Crabtree J."/>
            <person name="Creasy T."/>
            <person name="Davidsen T.M."/>
            <person name="Haft D.H."/>
            <person name="Zafar N."/>
            <person name="Zhou L."/>
            <person name="Halpin R."/>
            <person name="Holley T."/>
            <person name="Khouri H.M."/>
            <person name="Feldblyum T.V."/>
            <person name="White O."/>
            <person name="Fraser C.M."/>
            <person name="Chatterjee A.K."/>
            <person name="Cartinhour S."/>
            <person name="Schneider D."/>
            <person name="Mansfield J.W."/>
            <person name="Collmer A."/>
            <person name="Buell R."/>
        </authorList>
    </citation>
    <scope>NUCLEOTIDE SEQUENCE [LARGE SCALE GENOMIC DNA]</scope>
    <source>
        <strain>1448A / Race 6</strain>
    </source>
</reference>
<comment type="function">
    <text evidence="1">Catalyzes the reversible conversion of 2-phosphoglycerate (2-PG) into phosphoenolpyruvate (PEP). It is essential for the degradation of carbohydrates via glycolysis.</text>
</comment>
<comment type="catalytic activity">
    <reaction evidence="1">
        <text>(2R)-2-phosphoglycerate = phosphoenolpyruvate + H2O</text>
        <dbReference type="Rhea" id="RHEA:10164"/>
        <dbReference type="ChEBI" id="CHEBI:15377"/>
        <dbReference type="ChEBI" id="CHEBI:58289"/>
        <dbReference type="ChEBI" id="CHEBI:58702"/>
        <dbReference type="EC" id="4.2.1.11"/>
    </reaction>
</comment>
<comment type="cofactor">
    <cofactor evidence="1">
        <name>Mg(2+)</name>
        <dbReference type="ChEBI" id="CHEBI:18420"/>
    </cofactor>
    <text evidence="1">Binds a second Mg(2+) ion via substrate during catalysis.</text>
</comment>
<comment type="pathway">
    <text evidence="1">Carbohydrate degradation; glycolysis; pyruvate from D-glyceraldehyde 3-phosphate: step 4/5.</text>
</comment>
<comment type="subunit">
    <text evidence="1">Component of the RNA degradosome, a multiprotein complex involved in RNA processing and mRNA degradation.</text>
</comment>
<comment type="subcellular location">
    <subcellularLocation>
        <location evidence="1">Cytoplasm</location>
    </subcellularLocation>
    <subcellularLocation>
        <location evidence="1">Secreted</location>
    </subcellularLocation>
    <subcellularLocation>
        <location evidence="1">Cell surface</location>
    </subcellularLocation>
    <text evidence="1">Fractions of enolase are present in both the cytoplasm and on the cell surface.</text>
</comment>
<comment type="similarity">
    <text evidence="1">Belongs to the enolase family.</text>
</comment>
<evidence type="ECO:0000255" key="1">
    <source>
        <dbReference type="HAMAP-Rule" id="MF_00318"/>
    </source>
</evidence>
<organism>
    <name type="scientific">Pseudomonas savastanoi pv. phaseolicola (strain 1448A / Race 6)</name>
    <name type="common">Pseudomonas syringae pv. phaseolicola (strain 1448A / Race 6)</name>
    <dbReference type="NCBI Taxonomy" id="264730"/>
    <lineage>
        <taxon>Bacteria</taxon>
        <taxon>Pseudomonadati</taxon>
        <taxon>Pseudomonadota</taxon>
        <taxon>Gammaproteobacteria</taxon>
        <taxon>Pseudomonadales</taxon>
        <taxon>Pseudomonadaceae</taxon>
        <taxon>Pseudomonas</taxon>
    </lineage>
</organism>
<proteinExistence type="inferred from homology"/>
<accession>Q48F79</accession>
<sequence length="428" mass="45609">MAKIVDIKGREVLDSRGNPTVEADVVLDNGIVGSACAPSGASTGSREALELRDGDKSRYMGKGVLKAVANINGPIRDLLLGKDPVDQKALDHAMIKLDGTENKASLGANAILAVSLAAAKAAAQDQDLPLYAHIANLNGTPGVYSMPVPMMNIINGGEHADNNIDIQEFMIQPVGAKTFAEGLRWGTEIFHHLKAVLKARGLNTAVGDEGGFAPNLASNKEALDAIAEAVANAGYTLGTDVTLALDCAASEFYKNGKYKLSEEGEYSSAEFAEYLAELTRKHPIISIEDGLDESDWDGWKVLTDKIGEKVQLVGDDLFVTNTKILKEGIDKKIANSILIKFNQIGSLTETLEAIQMAKAAGYTAIISHRSGETEDSTIADLAVGTSAGQIKTGSLCRSDRVSKYNQLLRIEEQLGSKAAYRGRAEFRG</sequence>
<gene>
    <name evidence="1" type="primary">eno</name>
    <name type="ordered locus">PSPPH_3820</name>
</gene>
<keyword id="KW-0963">Cytoplasm</keyword>
<keyword id="KW-0324">Glycolysis</keyword>
<keyword id="KW-0456">Lyase</keyword>
<keyword id="KW-0460">Magnesium</keyword>
<keyword id="KW-0479">Metal-binding</keyword>
<keyword id="KW-0964">Secreted</keyword>